<organism>
    <name type="scientific">Shewanella frigidimarina (strain NCIMB 400)</name>
    <dbReference type="NCBI Taxonomy" id="318167"/>
    <lineage>
        <taxon>Bacteria</taxon>
        <taxon>Pseudomonadati</taxon>
        <taxon>Pseudomonadota</taxon>
        <taxon>Gammaproteobacteria</taxon>
        <taxon>Alteromonadales</taxon>
        <taxon>Shewanellaceae</taxon>
        <taxon>Shewanella</taxon>
    </lineage>
</organism>
<dbReference type="EMBL" id="CP000447">
    <property type="protein sequence ID" value="ABI70013.1"/>
    <property type="molecule type" value="Genomic_DNA"/>
</dbReference>
<dbReference type="RefSeq" id="WP_011635642.1">
    <property type="nucleotide sequence ID" value="NC_008345.1"/>
</dbReference>
<dbReference type="SMR" id="Q089Q2"/>
<dbReference type="STRING" id="318167.Sfri_0150"/>
<dbReference type="GeneID" id="90572205"/>
<dbReference type="KEGG" id="sfr:Sfri_0150"/>
<dbReference type="eggNOG" id="COG0089">
    <property type="taxonomic scope" value="Bacteria"/>
</dbReference>
<dbReference type="HOGENOM" id="CLU_037562_3_1_6"/>
<dbReference type="OrthoDB" id="9793353at2"/>
<dbReference type="Proteomes" id="UP000000684">
    <property type="component" value="Chromosome"/>
</dbReference>
<dbReference type="GO" id="GO:1990904">
    <property type="term" value="C:ribonucleoprotein complex"/>
    <property type="evidence" value="ECO:0007669"/>
    <property type="project" value="UniProtKB-KW"/>
</dbReference>
<dbReference type="GO" id="GO:0005840">
    <property type="term" value="C:ribosome"/>
    <property type="evidence" value="ECO:0007669"/>
    <property type="project" value="UniProtKB-KW"/>
</dbReference>
<dbReference type="GO" id="GO:0019843">
    <property type="term" value="F:rRNA binding"/>
    <property type="evidence" value="ECO:0007669"/>
    <property type="project" value="UniProtKB-UniRule"/>
</dbReference>
<dbReference type="GO" id="GO:0003735">
    <property type="term" value="F:structural constituent of ribosome"/>
    <property type="evidence" value="ECO:0007669"/>
    <property type="project" value="InterPro"/>
</dbReference>
<dbReference type="GO" id="GO:0006412">
    <property type="term" value="P:translation"/>
    <property type="evidence" value="ECO:0007669"/>
    <property type="project" value="UniProtKB-UniRule"/>
</dbReference>
<dbReference type="FunFam" id="3.30.70.330:FF:000001">
    <property type="entry name" value="50S ribosomal protein L23"/>
    <property type="match status" value="1"/>
</dbReference>
<dbReference type="Gene3D" id="3.30.70.330">
    <property type="match status" value="1"/>
</dbReference>
<dbReference type="HAMAP" id="MF_01369_B">
    <property type="entry name" value="Ribosomal_uL23_B"/>
    <property type="match status" value="1"/>
</dbReference>
<dbReference type="InterPro" id="IPR012677">
    <property type="entry name" value="Nucleotide-bd_a/b_plait_sf"/>
</dbReference>
<dbReference type="InterPro" id="IPR013025">
    <property type="entry name" value="Ribosomal_uL23-like"/>
</dbReference>
<dbReference type="InterPro" id="IPR012678">
    <property type="entry name" value="Ribosomal_uL23/eL15/eS24_sf"/>
</dbReference>
<dbReference type="InterPro" id="IPR001014">
    <property type="entry name" value="Ribosomal_uL23_CS"/>
</dbReference>
<dbReference type="NCBIfam" id="NF004358">
    <property type="entry name" value="PRK05738.1-1"/>
    <property type="match status" value="1"/>
</dbReference>
<dbReference type="NCBIfam" id="NF004359">
    <property type="entry name" value="PRK05738.1-3"/>
    <property type="match status" value="1"/>
</dbReference>
<dbReference type="NCBIfam" id="NF004363">
    <property type="entry name" value="PRK05738.2-4"/>
    <property type="match status" value="1"/>
</dbReference>
<dbReference type="PANTHER" id="PTHR11620">
    <property type="entry name" value="60S RIBOSOMAL PROTEIN L23A"/>
    <property type="match status" value="1"/>
</dbReference>
<dbReference type="Pfam" id="PF00276">
    <property type="entry name" value="Ribosomal_L23"/>
    <property type="match status" value="1"/>
</dbReference>
<dbReference type="SUPFAM" id="SSF54189">
    <property type="entry name" value="Ribosomal proteins S24e, L23 and L15e"/>
    <property type="match status" value="1"/>
</dbReference>
<dbReference type="PROSITE" id="PS00050">
    <property type="entry name" value="RIBOSOMAL_L23"/>
    <property type="match status" value="1"/>
</dbReference>
<protein>
    <recommendedName>
        <fullName evidence="1">Large ribosomal subunit protein uL23</fullName>
    </recommendedName>
    <alternativeName>
        <fullName evidence="2">50S ribosomal protein L23</fullName>
    </alternativeName>
</protein>
<evidence type="ECO:0000255" key="1">
    <source>
        <dbReference type="HAMAP-Rule" id="MF_01369"/>
    </source>
</evidence>
<evidence type="ECO:0000305" key="2"/>
<keyword id="KW-1185">Reference proteome</keyword>
<keyword id="KW-0687">Ribonucleoprotein</keyword>
<keyword id="KW-0689">Ribosomal protein</keyword>
<keyword id="KW-0694">RNA-binding</keyword>
<keyword id="KW-0699">rRNA-binding</keyword>
<feature type="chain" id="PRO_0000272840" description="Large ribosomal subunit protein uL23">
    <location>
        <begin position="1"/>
        <end position="100"/>
    </location>
</feature>
<name>RL23_SHEFN</name>
<comment type="function">
    <text evidence="1">One of the early assembly proteins it binds 23S rRNA. One of the proteins that surrounds the polypeptide exit tunnel on the outside of the ribosome. Forms the main docking site for trigger factor binding to the ribosome.</text>
</comment>
<comment type="subunit">
    <text evidence="1">Part of the 50S ribosomal subunit. Contacts protein L29, and trigger factor when it is bound to the ribosome.</text>
</comment>
<comment type="similarity">
    <text evidence="1">Belongs to the universal ribosomal protein uL23 family.</text>
</comment>
<reference key="1">
    <citation type="submission" date="2006-08" db="EMBL/GenBank/DDBJ databases">
        <title>Complete sequence of Shewanella frigidimarina NCIMB 400.</title>
        <authorList>
            <consortium name="US DOE Joint Genome Institute"/>
            <person name="Copeland A."/>
            <person name="Lucas S."/>
            <person name="Lapidus A."/>
            <person name="Barry K."/>
            <person name="Detter J.C."/>
            <person name="Glavina del Rio T."/>
            <person name="Hammon N."/>
            <person name="Israni S."/>
            <person name="Dalin E."/>
            <person name="Tice H."/>
            <person name="Pitluck S."/>
            <person name="Fredrickson J.K."/>
            <person name="Kolker E."/>
            <person name="McCuel L.A."/>
            <person name="DiChristina T."/>
            <person name="Nealson K.H."/>
            <person name="Newman D."/>
            <person name="Tiedje J.M."/>
            <person name="Zhou J."/>
            <person name="Romine M.F."/>
            <person name="Culley D.E."/>
            <person name="Serres M."/>
            <person name="Chertkov O."/>
            <person name="Brettin T."/>
            <person name="Bruce D."/>
            <person name="Han C."/>
            <person name="Tapia R."/>
            <person name="Gilna P."/>
            <person name="Schmutz J."/>
            <person name="Larimer F."/>
            <person name="Land M."/>
            <person name="Hauser L."/>
            <person name="Kyrpides N."/>
            <person name="Mikhailova N."/>
            <person name="Richardson P."/>
        </authorList>
    </citation>
    <scope>NUCLEOTIDE SEQUENCE [LARGE SCALE GENOMIC DNA]</scope>
    <source>
        <strain>NCIMB 400</strain>
    </source>
</reference>
<gene>
    <name evidence="1" type="primary">rplW</name>
    <name type="ordered locus">Sfri_0150</name>
</gene>
<proteinExistence type="inferred from homology"/>
<sequence>MIREERLLKVILGPHISEKSTVLAEKNNTVVFRVAIDATKAEIKAAVAKLFEVEVDSVRTLVNKGKTKRTGGRVGRRIDWKKAYVTLAAGAEIDFVGGAE</sequence>
<accession>Q089Q2</accession>